<proteinExistence type="evidence at protein level"/>
<organism>
    <name type="scientific">Conus imperialis</name>
    <name type="common">Imperial cone</name>
    <dbReference type="NCBI Taxonomy" id="35631"/>
    <lineage>
        <taxon>Eukaryota</taxon>
        <taxon>Metazoa</taxon>
        <taxon>Spiralia</taxon>
        <taxon>Lophotrochozoa</taxon>
        <taxon>Mollusca</taxon>
        <taxon>Gastropoda</taxon>
        <taxon>Caenogastropoda</taxon>
        <taxon>Neogastropoda</taxon>
        <taxon>Conoidea</taxon>
        <taxon>Conidae</taxon>
        <taxon>Conus</taxon>
        <taxon>Stephanoconus</taxon>
    </lineage>
</organism>
<name>CUE2_CONIM</name>
<evidence type="ECO:0000255" key="1"/>
<evidence type="ECO:0000269" key="2">
    <source>
    </source>
</evidence>
<evidence type="ECO:0000303" key="3">
    <source>
    </source>
</evidence>
<evidence type="ECO:0000305" key="4"/>
<evidence type="ECO:0000305" key="5">
    <source>
    </source>
</evidence>
<evidence type="ECO:0000312" key="6">
    <source>
        <dbReference type="EMBL" id="AME17683.1"/>
    </source>
</evidence>
<reference key="1">
    <citation type="journal article" date="2019" name="Mar. Drugs">
        <title>Transcriptomic-proteomic correlation in the predation-evoked venom of the cone snail, Conus imperialis.</title>
        <authorList>
            <person name="Jin A.H."/>
            <person name="Dutertre S."/>
            <person name="Dutt M."/>
            <person name="Lavergne V."/>
            <person name="Jones A."/>
            <person name="Lewis R.J."/>
            <person name="Alewood P.F."/>
        </authorList>
    </citation>
    <scope>NUCLEOTIDE SEQUENCE [MRNA]</scope>
    <scope>IDENTIFICATION BY MASS SPECTROMETRY</scope>
    <scope>SUBCELLULAR LOCATION</scope>
    <source>
        <tissue>Venom</tissue>
        <tissue>Venom duct</tissue>
    </source>
</reference>
<dbReference type="EMBL" id="KT377419">
    <property type="protein sequence ID" value="AME17683.1"/>
    <property type="molecule type" value="mRNA"/>
</dbReference>
<dbReference type="GO" id="GO:0005576">
    <property type="term" value="C:extracellular region"/>
    <property type="evidence" value="ECO:0007669"/>
    <property type="project" value="UniProtKB-SubCell"/>
</dbReference>
<dbReference type="GO" id="GO:0090729">
    <property type="term" value="F:toxin activity"/>
    <property type="evidence" value="ECO:0007669"/>
    <property type="project" value="UniProtKB-KW"/>
</dbReference>
<sequence length="124" mass="14348">MARFLSILLCFAMATGLAAGIRYPDRVLGRCSTHDLSKMEIDTNLDGVYSPHRSFCTCGSGEVYFTAKDRRNHSNYRVYVCGMPTEFCTAENPVRDPKKGNRWLQCRCRQYKMVIYRDWLVLCE</sequence>
<protein>
    <recommendedName>
        <fullName evidence="4">Conotoxin Im14.2</fullName>
    </recommendedName>
    <alternativeName>
        <fullName evidence="3 6">Conopeptide im025</fullName>
    </alternativeName>
</protein>
<feature type="signal peptide" evidence="1">
    <location>
        <begin position="1"/>
        <end position="20"/>
    </location>
</feature>
<feature type="propeptide" id="PRO_0000451007" evidence="4">
    <location>
        <begin position="21"/>
        <end position="99"/>
    </location>
</feature>
<feature type="peptide" id="PRO_5007179691" description="Conotoxin Im14.2">
    <location>
        <begin position="100"/>
        <end position="124"/>
    </location>
</feature>
<keyword id="KW-0165">Cleavage on pair of basic residues</keyword>
<keyword id="KW-1015">Disulfide bond</keyword>
<keyword id="KW-0528">Neurotoxin</keyword>
<keyword id="KW-0964">Secreted</keyword>
<keyword id="KW-0732">Signal</keyword>
<keyword id="KW-0800">Toxin</keyword>
<accession>A0A125S9F9</accession>
<comment type="function">
    <text evidence="4">Probable neurotoxin.</text>
</comment>
<comment type="subcellular location">
    <subcellularLocation>
        <location evidence="2">Secreted</location>
    </subcellularLocation>
</comment>
<comment type="tissue specificity">
    <text evidence="5">Expressed by the venom duct.</text>
</comment>
<comment type="domain">
    <text evidence="4">The cysteine framework is XIV (C-C-C-C).</text>
</comment>
<comment type="PTM">
    <text evidence="4">Contain 2 disulfide bonds.</text>
</comment>